<evidence type="ECO:0000255" key="1">
    <source>
        <dbReference type="HAMAP-Rule" id="MF_01862"/>
    </source>
</evidence>
<comment type="function">
    <text evidence="1">Specifically methylates the guanine in position 1207 of 16S rRNA in the 30S particle.</text>
</comment>
<comment type="catalytic activity">
    <reaction evidence="1">
        <text>guanosine(1207) in 16S rRNA + S-adenosyl-L-methionine = N(2)-methylguanosine(1207) in 16S rRNA + S-adenosyl-L-homocysteine + H(+)</text>
        <dbReference type="Rhea" id="RHEA:42736"/>
        <dbReference type="Rhea" id="RHEA-COMP:10213"/>
        <dbReference type="Rhea" id="RHEA-COMP:10214"/>
        <dbReference type="ChEBI" id="CHEBI:15378"/>
        <dbReference type="ChEBI" id="CHEBI:57856"/>
        <dbReference type="ChEBI" id="CHEBI:59789"/>
        <dbReference type="ChEBI" id="CHEBI:74269"/>
        <dbReference type="ChEBI" id="CHEBI:74481"/>
        <dbReference type="EC" id="2.1.1.172"/>
    </reaction>
</comment>
<comment type="subunit">
    <text evidence="1">Monomer.</text>
</comment>
<comment type="subcellular location">
    <subcellularLocation>
        <location evidence="1">Cytoplasm</location>
    </subcellularLocation>
</comment>
<comment type="similarity">
    <text evidence="1">Belongs to the methyltransferase superfamily. RsmC family.</text>
</comment>
<dbReference type="EC" id="2.1.1.172" evidence="1"/>
<dbReference type="EMBL" id="AM286415">
    <property type="protein sequence ID" value="CAL10679.1"/>
    <property type="molecule type" value="Genomic_DNA"/>
</dbReference>
<dbReference type="RefSeq" id="WP_011815514.1">
    <property type="nucleotide sequence ID" value="NC_008800.1"/>
</dbReference>
<dbReference type="RefSeq" id="YP_001004921.1">
    <property type="nucleotide sequence ID" value="NC_008800.1"/>
</dbReference>
<dbReference type="SMR" id="A1JJ89"/>
<dbReference type="KEGG" id="yen:YE0561"/>
<dbReference type="PATRIC" id="fig|393305.7.peg.654"/>
<dbReference type="eggNOG" id="COG2813">
    <property type="taxonomic scope" value="Bacteria"/>
</dbReference>
<dbReference type="HOGENOM" id="CLU_049581_0_1_6"/>
<dbReference type="OrthoDB" id="9816072at2"/>
<dbReference type="Proteomes" id="UP000000642">
    <property type="component" value="Chromosome"/>
</dbReference>
<dbReference type="GO" id="GO:0005737">
    <property type="term" value="C:cytoplasm"/>
    <property type="evidence" value="ECO:0007669"/>
    <property type="project" value="UniProtKB-SubCell"/>
</dbReference>
<dbReference type="GO" id="GO:0052914">
    <property type="term" value="F:16S rRNA (guanine(1207)-N(2))-methyltransferase activity"/>
    <property type="evidence" value="ECO:0007669"/>
    <property type="project" value="UniProtKB-EC"/>
</dbReference>
<dbReference type="GO" id="GO:0003676">
    <property type="term" value="F:nucleic acid binding"/>
    <property type="evidence" value="ECO:0007669"/>
    <property type="project" value="InterPro"/>
</dbReference>
<dbReference type="CDD" id="cd02440">
    <property type="entry name" value="AdoMet_MTases"/>
    <property type="match status" value="1"/>
</dbReference>
<dbReference type="Gene3D" id="3.40.50.150">
    <property type="entry name" value="Vaccinia Virus protein VP39"/>
    <property type="match status" value="2"/>
</dbReference>
<dbReference type="HAMAP" id="MF_01862">
    <property type="entry name" value="16SrRNA_methyltr_C"/>
    <property type="match status" value="1"/>
</dbReference>
<dbReference type="InterPro" id="IPR002052">
    <property type="entry name" value="DNA_methylase_N6_adenine_CS"/>
</dbReference>
<dbReference type="InterPro" id="IPR013675">
    <property type="entry name" value="Mtase_sm_N"/>
</dbReference>
<dbReference type="InterPro" id="IPR023543">
    <property type="entry name" value="rRNA_ssu_MeTfrase_C"/>
</dbReference>
<dbReference type="InterPro" id="IPR046977">
    <property type="entry name" value="RsmC/RlmG"/>
</dbReference>
<dbReference type="InterPro" id="IPR029063">
    <property type="entry name" value="SAM-dependent_MTases_sf"/>
</dbReference>
<dbReference type="InterPro" id="IPR007848">
    <property type="entry name" value="Small_mtfrase_dom"/>
</dbReference>
<dbReference type="NCBIfam" id="NF007023">
    <property type="entry name" value="PRK09489.1"/>
    <property type="match status" value="1"/>
</dbReference>
<dbReference type="PANTHER" id="PTHR47816">
    <property type="entry name" value="RIBOSOMAL RNA SMALL SUBUNIT METHYLTRANSFERASE C"/>
    <property type="match status" value="1"/>
</dbReference>
<dbReference type="PANTHER" id="PTHR47816:SF4">
    <property type="entry name" value="RIBOSOMAL RNA SMALL SUBUNIT METHYLTRANSFERASE C"/>
    <property type="match status" value="1"/>
</dbReference>
<dbReference type="Pfam" id="PF05175">
    <property type="entry name" value="MTS"/>
    <property type="match status" value="1"/>
</dbReference>
<dbReference type="Pfam" id="PF08468">
    <property type="entry name" value="MTS_N"/>
    <property type="match status" value="1"/>
</dbReference>
<dbReference type="SUPFAM" id="SSF53335">
    <property type="entry name" value="S-adenosyl-L-methionine-dependent methyltransferases"/>
    <property type="match status" value="1"/>
</dbReference>
<keyword id="KW-0963">Cytoplasm</keyword>
<keyword id="KW-0489">Methyltransferase</keyword>
<keyword id="KW-0698">rRNA processing</keyword>
<keyword id="KW-0949">S-adenosyl-L-methionine</keyword>
<keyword id="KW-0808">Transferase</keyword>
<name>RSMC_YERE8</name>
<protein>
    <recommendedName>
        <fullName evidence="1">Ribosomal RNA small subunit methyltransferase C</fullName>
        <ecNumber evidence="1">2.1.1.172</ecNumber>
    </recommendedName>
    <alternativeName>
        <fullName evidence="1">16S rRNA m2G1207 methyltransferase</fullName>
    </alternativeName>
    <alternativeName>
        <fullName evidence="1">rRNA (guanine-N(2)-)-methyltransferase RsmC</fullName>
    </alternativeName>
</protein>
<feature type="chain" id="PRO_0000369799" description="Ribosomal RNA small subunit methyltransferase C">
    <location>
        <begin position="1"/>
        <end position="347"/>
    </location>
</feature>
<gene>
    <name evidence="1" type="primary">rsmC</name>
    <name type="ordered locus">YE0561</name>
</gene>
<organism>
    <name type="scientific">Yersinia enterocolitica serotype O:8 / biotype 1B (strain NCTC 13174 / 8081)</name>
    <dbReference type="NCBI Taxonomy" id="393305"/>
    <lineage>
        <taxon>Bacteria</taxon>
        <taxon>Pseudomonadati</taxon>
        <taxon>Pseudomonadota</taxon>
        <taxon>Gammaproteobacteria</taxon>
        <taxon>Enterobacterales</taxon>
        <taxon>Yersiniaceae</taxon>
        <taxon>Yersinia</taxon>
    </lineage>
</organism>
<proteinExistence type="inferred from homology"/>
<accession>A1JJ89</accession>
<sequence length="347" mass="37774">MSALTPASEVILRHSDEFIARHVLFAGDLQDALPAQFDAAGIRVHTNQYHHWQLLSNTLDENVQFGLVATPETVAACDTLVYYWPKSKQEAQFQLANLLSLLPVGCDVFVVGENRSGVRSAEEMLSGFAQLTKIDSARRCGLYHGRLDKQPEFDADAWWESYQVGDVIVKTLPGVFSRDALDSGSHLLLSTFSEPFKGSVLDVGCGAGVLACVLAQQSPKIKWTLSDVSAAAIEASRATLAANNIEAQVIASNVYSDIKGRFEMIISNPPFHDGIQTSLTAAEMLIRGATAHLHVGGKLRIVANSFLPYPALLDAAFGSHEVLAQNGRFKVYQATVGRPPRDPKKKR</sequence>
<reference key="1">
    <citation type="journal article" date="2006" name="PLoS Genet.">
        <title>The complete genome sequence and comparative genome analysis of the high pathogenicity Yersinia enterocolitica strain 8081.</title>
        <authorList>
            <person name="Thomson N.R."/>
            <person name="Howard S."/>
            <person name="Wren B.W."/>
            <person name="Holden M.T.G."/>
            <person name="Crossman L."/>
            <person name="Challis G.L."/>
            <person name="Churcher C."/>
            <person name="Mungall K."/>
            <person name="Brooks K."/>
            <person name="Chillingworth T."/>
            <person name="Feltwell T."/>
            <person name="Abdellah Z."/>
            <person name="Hauser H."/>
            <person name="Jagels K."/>
            <person name="Maddison M."/>
            <person name="Moule S."/>
            <person name="Sanders M."/>
            <person name="Whitehead S."/>
            <person name="Quail M.A."/>
            <person name="Dougan G."/>
            <person name="Parkhill J."/>
            <person name="Prentice M.B."/>
        </authorList>
    </citation>
    <scope>NUCLEOTIDE SEQUENCE [LARGE SCALE GENOMIC DNA]</scope>
    <source>
        <strain>NCTC 13174 / 8081</strain>
    </source>
</reference>